<evidence type="ECO:0000250" key="1">
    <source>
        <dbReference type="UniProtKB" id="P0A955"/>
    </source>
</evidence>
<evidence type="ECO:0000305" key="2"/>
<keyword id="KW-0119">Carbohydrate metabolism</keyword>
<keyword id="KW-0963">Cytoplasm</keyword>
<keyword id="KW-0456">Lyase</keyword>
<keyword id="KW-1185">Reference proteome</keyword>
<keyword id="KW-0704">Schiff base</keyword>
<protein>
    <recommendedName>
        <fullName evidence="1">KHG/KDPG aldolase</fullName>
    </recommendedName>
    <alternativeName>
        <fullName evidence="1">(4S)-4-hydroxy-2-oxoglutarate aldolase</fullName>
        <ecNumber evidence="1">4.1.3.42</ecNumber>
    </alternativeName>
    <alternativeName>
        <fullName evidence="1">2-dehydro-3-deoxy-phosphogluconate aldolase</fullName>
        <ecNumber evidence="1">4.1.2.14</ecNumber>
    </alternativeName>
    <alternativeName>
        <fullName evidence="1">2-keto-3-deoxy-6-phosphogluconate aldolase</fullName>
        <shortName evidence="1">KDPG aldolase</shortName>
    </alternativeName>
    <alternativeName>
        <fullName evidence="1">2-keto-4-hydroxyglutarate aldolase</fullName>
        <shortName evidence="1">KHG aldolase</shortName>
        <shortName evidence="1">Ketohydroxyglutarate aldolase</shortName>
    </alternativeName>
</protein>
<comment type="function">
    <text evidence="1">Involved in the degradation of glucose via the Entner-Doudoroff pathway (By similarity). Catalyzes the reversible, stereospecific retro-aldol cleavage of 2-keto-3-deoxy-6-phosphogluconate (KDPG) to pyruvate and D-glyceraldehyde-3-phosphate (By similarity). In addition to its KDPG aldolase activity, catalyzes the reversible cleavage of 2-keto-4-hydroxyglutarate (KHG) to glyoxylate and pyruvate (By similarity). The enzyme is stereoselective for the S-enantiomer of KHG (By similarity). Cleavage of KHG could serve in tricarboxylic acid (TCA) cycle regulation or, when operating in the reverse direction, in the detoxification of glyoxylate (By similarity).</text>
</comment>
<comment type="catalytic activity">
    <reaction evidence="1">
        <text>2-dehydro-3-deoxy-6-phospho-D-gluconate = D-glyceraldehyde 3-phosphate + pyruvate</text>
        <dbReference type="Rhea" id="RHEA:17089"/>
        <dbReference type="ChEBI" id="CHEBI:15361"/>
        <dbReference type="ChEBI" id="CHEBI:57569"/>
        <dbReference type="ChEBI" id="CHEBI:59776"/>
        <dbReference type="EC" id="4.1.2.14"/>
    </reaction>
</comment>
<comment type="catalytic activity">
    <reaction evidence="1">
        <text>(4S)-4-hydroxy-2-oxoglutarate = glyoxylate + pyruvate</text>
        <dbReference type="Rhea" id="RHEA:35639"/>
        <dbReference type="ChEBI" id="CHEBI:15361"/>
        <dbReference type="ChEBI" id="CHEBI:36655"/>
        <dbReference type="ChEBI" id="CHEBI:71685"/>
        <dbReference type="EC" id="4.1.3.42"/>
    </reaction>
</comment>
<comment type="pathway">
    <text evidence="1">Carbohydrate acid metabolism; 2-dehydro-3-deoxy-D-gluconate degradation; D-glyceraldehyde 3-phosphate and pyruvate from 2-dehydro-3-deoxy-D-gluconate: step 2/2.</text>
</comment>
<comment type="pathway">
    <text evidence="1">Carbohydrate metabolism; glyoxylate and dicarboxylate metabolism.</text>
</comment>
<comment type="subunit">
    <text evidence="1">Homotrimer.</text>
</comment>
<comment type="subcellular location">
    <subcellularLocation>
        <location evidence="1">Cytoplasm</location>
    </subcellularLocation>
</comment>
<comment type="similarity">
    <text evidence="2">Belongs to the KHG/KDPG aldolase family.</text>
</comment>
<dbReference type="EC" id="4.1.3.42" evidence="1"/>
<dbReference type="EC" id="4.1.2.14" evidence="1"/>
<dbReference type="EMBL" id="AE005174">
    <property type="protein sequence ID" value="AAG56840.1"/>
    <property type="molecule type" value="Genomic_DNA"/>
</dbReference>
<dbReference type="EMBL" id="BA000007">
    <property type="protein sequence ID" value="BAB35983.1"/>
    <property type="molecule type" value="Genomic_DNA"/>
</dbReference>
<dbReference type="PIR" id="D85797">
    <property type="entry name" value="D85797"/>
</dbReference>
<dbReference type="PIR" id="H90948">
    <property type="entry name" value="H90948"/>
</dbReference>
<dbReference type="RefSeq" id="NP_310587.1">
    <property type="nucleotide sequence ID" value="NC_002695.1"/>
</dbReference>
<dbReference type="RefSeq" id="WP_000800512.1">
    <property type="nucleotide sequence ID" value="NZ_VOAI01000010.1"/>
</dbReference>
<dbReference type="SMR" id="P0A957"/>
<dbReference type="STRING" id="155864.Z2902"/>
<dbReference type="GeneID" id="912650"/>
<dbReference type="GeneID" id="93776117"/>
<dbReference type="KEGG" id="ece:Z2902"/>
<dbReference type="KEGG" id="ecs:ECs_2560"/>
<dbReference type="PATRIC" id="fig|386585.9.peg.2683"/>
<dbReference type="eggNOG" id="COG0800">
    <property type="taxonomic scope" value="Bacteria"/>
</dbReference>
<dbReference type="HOGENOM" id="CLU_077795_1_1_6"/>
<dbReference type="OMA" id="FFPAEYC"/>
<dbReference type="UniPathway" id="UPA00227"/>
<dbReference type="UniPathway" id="UPA00856">
    <property type="reaction ID" value="UER00829"/>
</dbReference>
<dbReference type="Proteomes" id="UP000000558">
    <property type="component" value="Chromosome"/>
</dbReference>
<dbReference type="Proteomes" id="UP000002519">
    <property type="component" value="Chromosome"/>
</dbReference>
<dbReference type="GO" id="GO:0005737">
    <property type="term" value="C:cytoplasm"/>
    <property type="evidence" value="ECO:0007669"/>
    <property type="project" value="UniProtKB-SubCell"/>
</dbReference>
<dbReference type="GO" id="GO:0106009">
    <property type="term" value="F:(4S)-4-hydroxy-2-oxoglutarate aldolase activity"/>
    <property type="evidence" value="ECO:0007669"/>
    <property type="project" value="RHEA"/>
</dbReference>
<dbReference type="GO" id="GO:0008700">
    <property type="term" value="F:(R,S)-4-hydroxy-2-oxoglutarate aldolase activity"/>
    <property type="evidence" value="ECO:0007669"/>
    <property type="project" value="UniProtKB-EC"/>
</dbReference>
<dbReference type="GO" id="GO:0008675">
    <property type="term" value="F:2-dehydro-3-deoxy-phosphogluconate aldolase activity"/>
    <property type="evidence" value="ECO:0007669"/>
    <property type="project" value="UniProtKB-EC"/>
</dbReference>
<dbReference type="CDD" id="cd00452">
    <property type="entry name" value="KDPG_aldolase"/>
    <property type="match status" value="1"/>
</dbReference>
<dbReference type="FunFam" id="3.20.20.70:FF:000054">
    <property type="entry name" value="KHG/KDPG aldolase"/>
    <property type="match status" value="1"/>
</dbReference>
<dbReference type="Gene3D" id="3.20.20.70">
    <property type="entry name" value="Aldolase class I"/>
    <property type="match status" value="1"/>
</dbReference>
<dbReference type="InterPro" id="IPR000887">
    <property type="entry name" value="Aldlse_KDPG_KHG"/>
</dbReference>
<dbReference type="InterPro" id="IPR013785">
    <property type="entry name" value="Aldolase_TIM"/>
</dbReference>
<dbReference type="InterPro" id="IPR031337">
    <property type="entry name" value="KDPG/KHG_AS_1"/>
</dbReference>
<dbReference type="InterPro" id="IPR031338">
    <property type="entry name" value="KDPG/KHG_AS_2"/>
</dbReference>
<dbReference type="NCBIfam" id="TIGR01182">
    <property type="entry name" value="eda"/>
    <property type="match status" value="1"/>
</dbReference>
<dbReference type="NCBIfam" id="NF004325">
    <property type="entry name" value="PRK05718.1"/>
    <property type="match status" value="1"/>
</dbReference>
<dbReference type="PANTHER" id="PTHR30246:SF1">
    <property type="entry name" value="2-DEHYDRO-3-DEOXY-6-PHOSPHOGALACTONATE ALDOLASE-RELATED"/>
    <property type="match status" value="1"/>
</dbReference>
<dbReference type="PANTHER" id="PTHR30246">
    <property type="entry name" value="2-KETO-3-DEOXY-6-PHOSPHOGLUCONATE ALDOLASE"/>
    <property type="match status" value="1"/>
</dbReference>
<dbReference type="Pfam" id="PF01081">
    <property type="entry name" value="Aldolase"/>
    <property type="match status" value="1"/>
</dbReference>
<dbReference type="SUPFAM" id="SSF51569">
    <property type="entry name" value="Aldolase"/>
    <property type="match status" value="1"/>
</dbReference>
<dbReference type="PROSITE" id="PS00159">
    <property type="entry name" value="ALDOLASE_KDPG_KHG_1"/>
    <property type="match status" value="1"/>
</dbReference>
<dbReference type="PROSITE" id="PS00160">
    <property type="entry name" value="ALDOLASE_KDPG_KHG_2"/>
    <property type="match status" value="1"/>
</dbReference>
<gene>
    <name type="primary">eda</name>
    <name type="ordered locus">Z2902</name>
    <name type="ordered locus">ECs2560</name>
</gene>
<accession>P0A957</accession>
<accession>P10177</accession>
<name>ALKH_ECO57</name>
<reference key="1">
    <citation type="journal article" date="2001" name="Nature">
        <title>Genome sequence of enterohaemorrhagic Escherichia coli O157:H7.</title>
        <authorList>
            <person name="Perna N.T."/>
            <person name="Plunkett G. III"/>
            <person name="Burland V."/>
            <person name="Mau B."/>
            <person name="Glasner J.D."/>
            <person name="Rose D.J."/>
            <person name="Mayhew G.F."/>
            <person name="Evans P.S."/>
            <person name="Gregor J."/>
            <person name="Kirkpatrick H.A."/>
            <person name="Posfai G."/>
            <person name="Hackett J."/>
            <person name="Klink S."/>
            <person name="Boutin A."/>
            <person name="Shao Y."/>
            <person name="Miller L."/>
            <person name="Grotbeck E.J."/>
            <person name="Davis N.W."/>
            <person name="Lim A."/>
            <person name="Dimalanta E.T."/>
            <person name="Potamousis K."/>
            <person name="Apodaca J."/>
            <person name="Anantharaman T.S."/>
            <person name="Lin J."/>
            <person name="Yen G."/>
            <person name="Schwartz D.C."/>
            <person name="Welch R.A."/>
            <person name="Blattner F.R."/>
        </authorList>
    </citation>
    <scope>NUCLEOTIDE SEQUENCE [LARGE SCALE GENOMIC DNA]</scope>
    <source>
        <strain>O157:H7 / EDL933 / ATCC 700927 / EHEC</strain>
    </source>
</reference>
<reference key="2">
    <citation type="journal article" date="2001" name="DNA Res.">
        <title>Complete genome sequence of enterohemorrhagic Escherichia coli O157:H7 and genomic comparison with a laboratory strain K-12.</title>
        <authorList>
            <person name="Hayashi T."/>
            <person name="Makino K."/>
            <person name="Ohnishi M."/>
            <person name="Kurokawa K."/>
            <person name="Ishii K."/>
            <person name="Yokoyama K."/>
            <person name="Han C.-G."/>
            <person name="Ohtsubo E."/>
            <person name="Nakayama K."/>
            <person name="Murata T."/>
            <person name="Tanaka M."/>
            <person name="Tobe T."/>
            <person name="Iida T."/>
            <person name="Takami H."/>
            <person name="Honda T."/>
            <person name="Sasakawa C."/>
            <person name="Ogasawara N."/>
            <person name="Yasunaga T."/>
            <person name="Kuhara S."/>
            <person name="Shiba T."/>
            <person name="Hattori M."/>
            <person name="Shinagawa H."/>
        </authorList>
    </citation>
    <scope>NUCLEOTIDE SEQUENCE [LARGE SCALE GENOMIC DNA]</scope>
    <source>
        <strain>O157:H7 / Sakai / RIMD 0509952 / EHEC</strain>
    </source>
</reference>
<sequence length="213" mass="22284">MKNWKTSAESILTTGPVVPVIVVKKLEHAVPMAKALVAGGVRVLEVTLRTECAVDAIRAIAKEVPEAIVGAGTVLNPQQLAEVTEAGAQFAISPGLTEPLLKAATEGTIPLIPGISTVSELMLGMDYGLKEFKFFPAEANGGVKALQAIAGPFSQVRFCPTGGISPANYRDYLALKSVLCIGGSWLVPADALEAGDYDRITKLAREAVEGAKL</sequence>
<feature type="chain" id="PRO_0000201038" description="KHG/KDPG aldolase">
    <location>
        <begin position="1"/>
        <end position="213"/>
    </location>
</feature>
<feature type="active site" description="Proton acceptor" evidence="1">
    <location>
        <position position="45"/>
    </location>
</feature>
<feature type="active site" description="Schiff-base intermediate with substrate" evidence="1">
    <location>
        <position position="133"/>
    </location>
</feature>
<feature type="binding site" evidence="1">
    <location>
        <position position="49"/>
    </location>
    <ligand>
        <name>pyruvate</name>
        <dbReference type="ChEBI" id="CHEBI:15361"/>
    </ligand>
</feature>
<feature type="binding site" evidence="1">
    <location>
        <position position="73"/>
    </location>
    <ligand>
        <name>pyruvate</name>
        <dbReference type="ChEBI" id="CHEBI:15361"/>
    </ligand>
</feature>
<feature type="binding site" description="covalent" evidence="1">
    <location>
        <position position="133"/>
    </location>
    <ligand>
        <name>pyruvate</name>
        <dbReference type="ChEBI" id="CHEBI:15361"/>
    </ligand>
</feature>
<feature type="site" description="Plays a major role in determining the stereoselectivity" evidence="1">
    <location>
        <position position="161"/>
    </location>
</feature>
<organism>
    <name type="scientific">Escherichia coli O157:H7</name>
    <dbReference type="NCBI Taxonomy" id="83334"/>
    <lineage>
        <taxon>Bacteria</taxon>
        <taxon>Pseudomonadati</taxon>
        <taxon>Pseudomonadota</taxon>
        <taxon>Gammaproteobacteria</taxon>
        <taxon>Enterobacterales</taxon>
        <taxon>Enterobacteriaceae</taxon>
        <taxon>Escherichia</taxon>
    </lineage>
</organism>
<proteinExistence type="inferred from homology"/>